<evidence type="ECO:0000250" key="1"/>
<evidence type="ECO:0000305" key="2"/>
<evidence type="ECO:0007829" key="3">
    <source>
        <dbReference type="PDB" id="6XXY"/>
    </source>
</evidence>
<reference key="1">
    <citation type="journal article" date="1995" name="Science">
        <title>Whole-genome random sequencing and assembly of Haemophilus influenzae Rd.</title>
        <authorList>
            <person name="Fleischmann R.D."/>
            <person name="Adams M.D."/>
            <person name="White O."/>
            <person name="Clayton R.A."/>
            <person name="Kirkness E.F."/>
            <person name="Kerlavage A.R."/>
            <person name="Bult C.J."/>
            <person name="Tomb J.-F."/>
            <person name="Dougherty B.A."/>
            <person name="Merrick J.M."/>
            <person name="McKenney K."/>
            <person name="Sutton G.G."/>
            <person name="FitzHugh W."/>
            <person name="Fields C.A."/>
            <person name="Gocayne J.D."/>
            <person name="Scott J.D."/>
            <person name="Shirley R."/>
            <person name="Liu L.-I."/>
            <person name="Glodek A."/>
            <person name="Kelley J.M."/>
            <person name="Weidman J.F."/>
            <person name="Phillips C.A."/>
            <person name="Spriggs T."/>
            <person name="Hedblom E."/>
            <person name="Cotton M.D."/>
            <person name="Utterback T.R."/>
            <person name="Hanna M.C."/>
            <person name="Nguyen D.T."/>
            <person name="Saudek D.M."/>
            <person name="Brandon R.C."/>
            <person name="Fine L.D."/>
            <person name="Fritchman J.L."/>
            <person name="Fuhrmann J.L."/>
            <person name="Geoghagen N.S.M."/>
            <person name="Gnehm C.L."/>
            <person name="McDonald L.A."/>
            <person name="Small K.V."/>
            <person name="Fraser C.M."/>
            <person name="Smith H.O."/>
            <person name="Venter J.C."/>
        </authorList>
    </citation>
    <scope>NUCLEOTIDE SEQUENCE [LARGE SCALE GENOMIC DNA]</scope>
    <source>
        <strain>ATCC 51907 / DSM 11121 / KW20 / Rd</strain>
    </source>
</reference>
<dbReference type="EC" id="1.1.1.85"/>
<dbReference type="EMBL" id="L42023">
    <property type="protein sequence ID" value="AAC22648.1"/>
    <property type="molecule type" value="Genomic_DNA"/>
</dbReference>
<dbReference type="PIR" id="F64106">
    <property type="entry name" value="F64106"/>
</dbReference>
<dbReference type="RefSeq" id="NP_439150.1">
    <property type="nucleotide sequence ID" value="NC_000907.1"/>
</dbReference>
<dbReference type="PDB" id="6XXY">
    <property type="method" value="X-ray"/>
    <property type="resolution" value="2.09 A"/>
    <property type="chains" value="A/B=1-358"/>
</dbReference>
<dbReference type="PDBsum" id="6XXY"/>
<dbReference type="SMR" id="P43860"/>
<dbReference type="STRING" id="71421.HI_0987"/>
<dbReference type="EnsemblBacteria" id="AAC22648">
    <property type="protein sequence ID" value="AAC22648"/>
    <property type="gene ID" value="HI_0987"/>
</dbReference>
<dbReference type="KEGG" id="hin:HI_0987"/>
<dbReference type="PATRIC" id="fig|71421.8.peg.1030"/>
<dbReference type="eggNOG" id="COG0473">
    <property type="taxonomic scope" value="Bacteria"/>
</dbReference>
<dbReference type="HOGENOM" id="CLU_031953_0_3_6"/>
<dbReference type="OrthoDB" id="9767905at2"/>
<dbReference type="PhylomeDB" id="P43860"/>
<dbReference type="BioCyc" id="HINF71421:G1GJ1-1029-MONOMER"/>
<dbReference type="UniPathway" id="UPA00048">
    <property type="reaction ID" value="UER00072"/>
</dbReference>
<dbReference type="Proteomes" id="UP000000579">
    <property type="component" value="Chromosome"/>
</dbReference>
<dbReference type="GO" id="GO:0005829">
    <property type="term" value="C:cytosol"/>
    <property type="evidence" value="ECO:0000318"/>
    <property type="project" value="GO_Central"/>
</dbReference>
<dbReference type="GO" id="GO:0003862">
    <property type="term" value="F:3-isopropylmalate dehydrogenase activity"/>
    <property type="evidence" value="ECO:0000318"/>
    <property type="project" value="GO_Central"/>
</dbReference>
<dbReference type="GO" id="GO:0000287">
    <property type="term" value="F:magnesium ion binding"/>
    <property type="evidence" value="ECO:0007669"/>
    <property type="project" value="InterPro"/>
</dbReference>
<dbReference type="GO" id="GO:0051287">
    <property type="term" value="F:NAD binding"/>
    <property type="evidence" value="ECO:0007669"/>
    <property type="project" value="InterPro"/>
</dbReference>
<dbReference type="GO" id="GO:0009098">
    <property type="term" value="P:L-leucine biosynthetic process"/>
    <property type="evidence" value="ECO:0000318"/>
    <property type="project" value="GO_Central"/>
</dbReference>
<dbReference type="FunFam" id="3.40.718.10:FF:000004">
    <property type="entry name" value="3-isopropylmalate dehydrogenase"/>
    <property type="match status" value="1"/>
</dbReference>
<dbReference type="Gene3D" id="3.40.718.10">
    <property type="entry name" value="Isopropylmalate Dehydrogenase"/>
    <property type="match status" value="1"/>
</dbReference>
<dbReference type="HAMAP" id="MF_01033">
    <property type="entry name" value="LeuB_type1"/>
    <property type="match status" value="1"/>
</dbReference>
<dbReference type="InterPro" id="IPR019818">
    <property type="entry name" value="IsoCit/isopropylmalate_DH_CS"/>
</dbReference>
<dbReference type="InterPro" id="IPR024084">
    <property type="entry name" value="IsoPropMal-DH-like_dom"/>
</dbReference>
<dbReference type="InterPro" id="IPR004429">
    <property type="entry name" value="Isopropylmalate_DH"/>
</dbReference>
<dbReference type="NCBIfam" id="TIGR00169">
    <property type="entry name" value="leuB"/>
    <property type="match status" value="1"/>
</dbReference>
<dbReference type="PANTHER" id="PTHR42979">
    <property type="entry name" value="3-ISOPROPYLMALATE DEHYDROGENASE"/>
    <property type="match status" value="1"/>
</dbReference>
<dbReference type="PANTHER" id="PTHR42979:SF1">
    <property type="entry name" value="3-ISOPROPYLMALATE DEHYDROGENASE"/>
    <property type="match status" value="1"/>
</dbReference>
<dbReference type="Pfam" id="PF00180">
    <property type="entry name" value="Iso_dh"/>
    <property type="match status" value="1"/>
</dbReference>
<dbReference type="SMART" id="SM01329">
    <property type="entry name" value="Iso_dh"/>
    <property type="match status" value="1"/>
</dbReference>
<dbReference type="SUPFAM" id="SSF53659">
    <property type="entry name" value="Isocitrate/Isopropylmalate dehydrogenase-like"/>
    <property type="match status" value="1"/>
</dbReference>
<dbReference type="PROSITE" id="PS00470">
    <property type="entry name" value="IDH_IMDH"/>
    <property type="match status" value="1"/>
</dbReference>
<gene>
    <name type="primary">leuB</name>
    <name type="ordered locus">HI_0987</name>
</gene>
<organism>
    <name type="scientific">Haemophilus influenzae (strain ATCC 51907 / DSM 11121 / KW20 / Rd)</name>
    <dbReference type="NCBI Taxonomy" id="71421"/>
    <lineage>
        <taxon>Bacteria</taxon>
        <taxon>Pseudomonadati</taxon>
        <taxon>Pseudomonadota</taxon>
        <taxon>Gammaproteobacteria</taxon>
        <taxon>Pasteurellales</taxon>
        <taxon>Pasteurellaceae</taxon>
        <taxon>Haemophilus</taxon>
    </lineage>
</organism>
<name>LEU3_HAEIN</name>
<keyword id="KW-0002">3D-structure</keyword>
<keyword id="KW-0028">Amino-acid biosynthesis</keyword>
<keyword id="KW-0100">Branched-chain amino acid biosynthesis</keyword>
<keyword id="KW-0963">Cytoplasm</keyword>
<keyword id="KW-0432">Leucine biosynthesis</keyword>
<keyword id="KW-0460">Magnesium</keyword>
<keyword id="KW-0464">Manganese</keyword>
<keyword id="KW-0479">Metal-binding</keyword>
<keyword id="KW-0520">NAD</keyword>
<keyword id="KW-0560">Oxidoreductase</keyword>
<keyword id="KW-1185">Reference proteome</keyword>
<protein>
    <recommendedName>
        <fullName>3-isopropylmalate dehydrogenase</fullName>
        <ecNumber>1.1.1.85</ecNumber>
    </recommendedName>
    <alternativeName>
        <fullName>3-IPM-DH</fullName>
    </alternativeName>
    <alternativeName>
        <fullName>Beta-IPM dehydrogenase</fullName>
        <shortName>IMDH</shortName>
    </alternativeName>
</protein>
<feature type="chain" id="PRO_0000083698" description="3-isopropylmalate dehydrogenase">
    <location>
        <begin position="1"/>
        <end position="358"/>
    </location>
</feature>
<feature type="binding site" evidence="1">
    <location>
        <begin position="77"/>
        <end position="90"/>
    </location>
    <ligand>
        <name>NAD(+)</name>
        <dbReference type="ChEBI" id="CHEBI:57540"/>
    </ligand>
</feature>
<feature type="binding site" evidence="1">
    <location>
        <position position="98"/>
    </location>
    <ligand>
        <name>substrate</name>
    </ligand>
</feature>
<feature type="binding site" evidence="1">
    <location>
        <position position="108"/>
    </location>
    <ligand>
        <name>substrate</name>
    </ligand>
</feature>
<feature type="binding site" evidence="1">
    <location>
        <position position="137"/>
    </location>
    <ligand>
        <name>substrate</name>
    </ligand>
</feature>
<feature type="binding site" evidence="1">
    <location>
        <position position="226"/>
    </location>
    <ligand>
        <name>Mg(2+)</name>
        <dbReference type="ChEBI" id="CHEBI:18420"/>
    </ligand>
</feature>
<feature type="binding site" evidence="1">
    <location>
        <position position="226"/>
    </location>
    <ligand>
        <name>substrate</name>
    </ligand>
</feature>
<feature type="binding site" evidence="1">
    <location>
        <position position="250"/>
    </location>
    <ligand>
        <name>Mg(2+)</name>
        <dbReference type="ChEBI" id="CHEBI:18420"/>
    </ligand>
</feature>
<feature type="binding site" evidence="1">
    <location>
        <position position="254"/>
    </location>
    <ligand>
        <name>Mg(2+)</name>
        <dbReference type="ChEBI" id="CHEBI:18420"/>
    </ligand>
</feature>
<feature type="binding site" evidence="1">
    <location>
        <begin position="284"/>
        <end position="296"/>
    </location>
    <ligand>
        <name>NAD(+)</name>
        <dbReference type="ChEBI" id="CHEBI:57540"/>
    </ligand>
</feature>
<feature type="site" description="Important for catalysis" evidence="1">
    <location>
        <position position="144"/>
    </location>
</feature>
<feature type="site" description="Important for catalysis" evidence="1">
    <location>
        <position position="194"/>
    </location>
</feature>
<feature type="strand" evidence="3">
    <location>
        <begin position="4"/>
        <end position="12"/>
    </location>
</feature>
<feature type="helix" evidence="3">
    <location>
        <begin position="15"/>
        <end position="33"/>
    </location>
</feature>
<feature type="strand" evidence="3">
    <location>
        <begin position="37"/>
        <end position="41"/>
    </location>
</feature>
<feature type="helix" evidence="3">
    <location>
        <begin position="45"/>
        <end position="52"/>
    </location>
</feature>
<feature type="helix" evidence="3">
    <location>
        <begin position="58"/>
        <end position="65"/>
    </location>
</feature>
<feature type="strand" evidence="3">
    <location>
        <begin position="68"/>
        <end position="74"/>
    </location>
</feature>
<feature type="helix" evidence="3">
    <location>
        <begin position="78"/>
        <end position="80"/>
    </location>
</feature>
<feature type="helix" evidence="3">
    <location>
        <begin position="85"/>
        <end position="87"/>
    </location>
</feature>
<feature type="helix" evidence="3">
    <location>
        <begin position="89"/>
        <end position="92"/>
    </location>
</feature>
<feature type="helix" evidence="3">
    <location>
        <begin position="94"/>
        <end position="100"/>
    </location>
</feature>
<feature type="strand" evidence="3">
    <location>
        <begin position="105"/>
        <end position="111"/>
    </location>
</feature>
<feature type="turn" evidence="3">
    <location>
        <begin position="117"/>
        <end position="119"/>
    </location>
</feature>
<feature type="helix" evidence="3">
    <location>
        <begin position="124"/>
        <end position="128"/>
    </location>
</feature>
<feature type="strand" evidence="3">
    <location>
        <begin position="132"/>
        <end position="138"/>
    </location>
</feature>
<feature type="helix" evidence="3">
    <location>
        <begin position="142"/>
        <end position="144"/>
    </location>
</feature>
<feature type="strand" evidence="3">
    <location>
        <begin position="150"/>
        <end position="152"/>
    </location>
</feature>
<feature type="helix" evidence="3">
    <location>
        <begin position="155"/>
        <end position="157"/>
    </location>
</feature>
<feature type="strand" evidence="3">
    <location>
        <begin position="159"/>
        <end position="167"/>
    </location>
</feature>
<feature type="helix" evidence="3">
    <location>
        <begin position="168"/>
        <end position="183"/>
    </location>
</feature>
<feature type="turn" evidence="3">
    <location>
        <begin position="184"/>
        <end position="186"/>
    </location>
</feature>
<feature type="strand" evidence="3">
    <location>
        <begin position="187"/>
        <end position="193"/>
    </location>
</feature>
<feature type="turn" evidence="3">
    <location>
        <begin position="195"/>
        <end position="197"/>
    </location>
</feature>
<feature type="helix" evidence="3">
    <location>
        <begin position="199"/>
        <end position="212"/>
    </location>
</feature>
<feature type="strand" evidence="3">
    <location>
        <begin position="218"/>
        <end position="224"/>
    </location>
</feature>
<feature type="helix" evidence="3">
    <location>
        <begin position="225"/>
        <end position="234"/>
    </location>
</feature>
<feature type="helix" evidence="3">
    <location>
        <begin position="236"/>
        <end position="238"/>
    </location>
</feature>
<feature type="strand" evidence="3">
    <location>
        <begin position="240"/>
        <end position="244"/>
    </location>
</feature>
<feature type="helix" evidence="3">
    <location>
        <begin position="246"/>
        <end position="259"/>
    </location>
</feature>
<feature type="helix" evidence="3">
    <location>
        <begin position="263"/>
        <end position="265"/>
    </location>
</feature>
<feature type="strand" evidence="3">
    <location>
        <begin position="267"/>
        <end position="271"/>
    </location>
</feature>
<feature type="strand" evidence="3">
    <location>
        <begin position="277"/>
        <end position="283"/>
    </location>
</feature>
<feature type="turn" evidence="3">
    <location>
        <begin position="287"/>
        <end position="291"/>
    </location>
</feature>
<feature type="helix" evidence="3">
    <location>
        <begin position="298"/>
        <end position="312"/>
    </location>
</feature>
<feature type="helix" evidence="3">
    <location>
        <begin position="315"/>
        <end position="330"/>
    </location>
</feature>
<feature type="helix" evidence="3">
    <location>
        <begin position="347"/>
        <end position="356"/>
    </location>
</feature>
<comment type="function">
    <text evidence="1">Catalyzes the oxidation of 3-carboxy-2-hydroxy-4-methylpentanoate (3-isopropylmalate) to 3-carboxy-4-methyl-2-oxopentanoate. The product decarboxylates to 4-methyl-2 oxopentanoate (By similarity).</text>
</comment>
<comment type="catalytic activity">
    <reaction>
        <text>(2R,3S)-3-isopropylmalate + NAD(+) = 4-methyl-2-oxopentanoate + CO2 + NADH</text>
        <dbReference type="Rhea" id="RHEA:32271"/>
        <dbReference type="ChEBI" id="CHEBI:16526"/>
        <dbReference type="ChEBI" id="CHEBI:17865"/>
        <dbReference type="ChEBI" id="CHEBI:35121"/>
        <dbReference type="ChEBI" id="CHEBI:57540"/>
        <dbReference type="ChEBI" id="CHEBI:57945"/>
        <dbReference type="EC" id="1.1.1.85"/>
    </reaction>
</comment>
<comment type="cofactor">
    <cofactor evidence="1">
        <name>Mg(2+)</name>
        <dbReference type="ChEBI" id="CHEBI:18420"/>
    </cofactor>
    <cofactor evidence="1">
        <name>Mn(2+)</name>
        <dbReference type="ChEBI" id="CHEBI:29035"/>
    </cofactor>
    <text evidence="1">Binds 1 Mg(2+) or Mn(2+) ion per subunit.</text>
</comment>
<comment type="pathway">
    <text>Amino-acid biosynthesis; L-leucine biosynthesis; L-leucine from 3-methyl-2-oxobutanoate: step 3/4.</text>
</comment>
<comment type="subunit">
    <text evidence="1">Homodimer.</text>
</comment>
<comment type="subcellular location">
    <subcellularLocation>
        <location evidence="1">Cytoplasm</location>
    </subcellularLocation>
</comment>
<comment type="similarity">
    <text evidence="2">Belongs to the isocitrate and isopropylmalate dehydrogenases family. LeuB type 1 subfamily.</text>
</comment>
<accession>P43860</accession>
<sequence>MQSYNIAVLAGDGIGPEVMAEAIKVLNRVQEKFGFKLNFNEFFVGGAAIEHCGYPLPAETLKGCDQADAILFGSVGGPKWTNLPPDQQPERGALLPLRKHFKLFCNLRPATLYKGLEKFCPLRADIAAKGFDMVVVRELTGGIYFGQPKGREGDGVQTKAFDTEVYYKYEIERIARAAFEAAMKRNKKVTSVDKANVLQSSILWRETVTEMAKDYPEVTLEHIYIDNATMQLIKSPESFDVLLCSNIFGDIISDEAAMITGSMGMLPSASLNEEGFGLYEPAGGSAPDIAGKGIANPIAQILSAAMMLRYSFNLNEAADAIESAVQKVLASGHRTADLADDSTPVSTAEMGTLITQAI</sequence>
<proteinExistence type="evidence at protein level"/>